<name>CND1_XENLA</name>
<feature type="chain" id="PRO_0000095037" description="Condensin complex subunit 1">
    <location>
        <begin position="1"/>
        <end position="1364"/>
    </location>
</feature>
<feature type="region of interest" description="Interaction with XCAP-E and XCAP-C" evidence="1">
    <location>
        <begin position="1"/>
        <end position="588"/>
    </location>
</feature>
<feature type="region of interest" description="Disordered" evidence="2">
    <location>
        <begin position="567"/>
        <end position="596"/>
    </location>
</feature>
<feature type="region of interest" description="Disordered" evidence="2">
    <location>
        <begin position="1273"/>
        <end position="1364"/>
    </location>
</feature>
<feature type="short sequence motif" description="Bipartite nuclear localization signal" evidence="1">
    <location>
        <begin position="1317"/>
        <end position="1326"/>
    </location>
</feature>
<feature type="compositionally biased region" description="Basic and acidic residues" evidence="2">
    <location>
        <begin position="567"/>
        <end position="577"/>
    </location>
</feature>
<feature type="compositionally biased region" description="Polar residues" evidence="2">
    <location>
        <begin position="579"/>
        <end position="596"/>
    </location>
</feature>
<feature type="compositionally biased region" description="Acidic residues" evidence="2">
    <location>
        <begin position="1333"/>
        <end position="1345"/>
    </location>
</feature>
<feature type="modified residue" description="Phosphothreonine; by CDK1" evidence="5">
    <location>
        <position position="1314"/>
    </location>
</feature>
<feature type="modified residue" description="Phosphothreonine; by CDK1" evidence="5">
    <location>
        <position position="1348"/>
    </location>
</feature>
<feature type="modified residue" description="Phosphothreonine; by CDK1" evidence="5">
    <location>
        <position position="1353"/>
    </location>
</feature>
<feature type="sequence conflict" description="In Ref. 2; AAD15962." evidence="7" ref="2">
    <original>Q</original>
    <variation>H</variation>
    <location>
        <position position="22"/>
    </location>
</feature>
<feature type="sequence conflict" description="In Ref. 2; AAD15962." evidence="7" ref="2">
    <original>A</original>
    <variation>G</variation>
    <location>
        <position position="49"/>
    </location>
</feature>
<feature type="sequence conflict" description="In Ref. 2; AAD15962." evidence="7" ref="2">
    <original>L</original>
    <variation>M</variation>
    <location>
        <position position="102"/>
    </location>
</feature>
<feature type="sequence conflict" description="In Ref. 2; AAD15962." evidence="7" ref="2">
    <original>L</original>
    <variation>P</variation>
    <location>
        <position position="175"/>
    </location>
</feature>
<feature type="sequence conflict" description="In Ref. 2; AAD15962." evidence="7" ref="2">
    <original>E</original>
    <variation>G</variation>
    <location>
        <position position="203"/>
    </location>
</feature>
<feature type="sequence conflict" description="In Ref. 2; AAD15962." evidence="7" ref="2">
    <original>S</original>
    <variation>A</variation>
    <location>
        <position position="332"/>
    </location>
</feature>
<feature type="sequence conflict" description="In Ref. 2; AAD15962." evidence="7" ref="2">
    <original>S</original>
    <variation>T</variation>
    <location>
        <position position="357"/>
    </location>
</feature>
<feature type="sequence conflict" description="In Ref. 2; AAD15962." evidence="7" ref="2">
    <original>N</original>
    <variation>S</variation>
    <location>
        <position position="385"/>
    </location>
</feature>
<feature type="sequence conflict" description="In Ref. 2; AAD15962." evidence="7" ref="2">
    <original>E</original>
    <variation>EE</variation>
    <location>
        <position position="503"/>
    </location>
</feature>
<feature type="sequence conflict" description="In Ref. 2; AAD15962." evidence="7" ref="2">
    <original>REQ</original>
    <variation>ARR</variation>
    <location>
        <begin position="511"/>
        <end position="513"/>
    </location>
</feature>
<feature type="sequence conflict" description="In Ref. 2; AAD15962." evidence="7" ref="2">
    <original>E</original>
    <variation>V</variation>
    <location>
        <position position="553"/>
    </location>
</feature>
<feature type="sequence conflict" description="In Ref. 2; AAD15962." evidence="7" ref="2">
    <original>PTT</original>
    <variation>STA</variation>
    <location>
        <begin position="571"/>
        <end position="573"/>
    </location>
</feature>
<feature type="sequence conflict" description="In Ref. 2; AAD15962." evidence="7" ref="2">
    <location>
        <begin position="584"/>
        <end position="588"/>
    </location>
</feature>
<feature type="sequence conflict" description="In Ref. 2; AAD15962." evidence="7" ref="2">
    <original>N</original>
    <variation>K</variation>
    <location>
        <position position="595"/>
    </location>
</feature>
<feature type="sequence conflict" description="In Ref. 2; AAD15962." evidence="7" ref="2">
    <original>EF</original>
    <variation>AL</variation>
    <location>
        <begin position="752"/>
        <end position="753"/>
    </location>
</feature>
<feature type="sequence conflict" description="In Ref. 2; AAD15962." evidence="7" ref="2">
    <original>R</original>
    <variation>W</variation>
    <location>
        <position position="797"/>
    </location>
</feature>
<feature type="sequence conflict" description="In Ref. 2; AAD15962." evidence="7" ref="2">
    <original>P</original>
    <variation>A</variation>
    <location>
        <position position="1290"/>
    </location>
</feature>
<feature type="sequence conflict" description="In Ref. 2; AAD15962." evidence="7" ref="2">
    <original>D</original>
    <variation>G</variation>
    <location>
        <position position="1310"/>
    </location>
</feature>
<sequence>MTFHFHIPLAFRDLLKSGGIGQYVVQEVLPVRHVDAQFAAFQTSFRTEAPLCILQHFDTLYSILHHFRSLDIAIKEDVLEVMVKVASRHANELPAILEDLNLSVPQRAAHLNALKMNCFILTQLIEAFEAETYKASLGSVEPSGKGKKAKSKPEGFSWESERESILQALTHLLQLDIRRLWSMSVVEEEFVSMMTSCCYKMMENPNIVMAKNKSTREALGHLLGVTVKRYNHMLSASVKVIQLLQHFEHLASVLVHTVSLWATEYGMKPVIGEIMREIGQKCSQDLSRESSGFKAFATFLTELAERIPAIMMPSISVLLDYLDGENYMMRNSVLTVMGEMVVRVLSGDQLEEAEKSSRDQFLDTLQEHLHDVNTYVRSCVIQIYNRIVQEKALPLSRFQSVVTLVVGRLFDKSVNVCKNAIQLLASFLANNPFTCKLSSVDLKVPLEKETKKLKEMREKYQGPKPVVVISPEEEWEAMLPEVLEAFKILQQESKEEEDIETEEIESSQHLREQILILLRKTSYKNSIRLTQKGIERFQEDPLFSEGDSEAKSELGILEKIFTEKKADLEQPTTKDQDDAQVNPTSEELPSQEVQNSDMDKQEMLVQYLSDAHHFALKIEEAIDVISKMMYETAVSVVQEVIEFFVTVSQFGVSQALLGVRRMLPLVWSKEPGVREAVLSAYRRLYLSSNGESERVKAQALVRSLSLLMVDSSAGILQCLEEIVSEFVQKGDIHPSVIQLLWEKFTQKSPCSEFERRAAVMLLGMMTRGQPEIVMSNLDTLVSVGLGEQVQKDYQLAREVCNCILKITDSQKQTLGKSTEPFRLPKDHSLFVCLTEAVAGGIGLSGLHWLPFKETAVRLVYELGEEPEEICSEILLRCSQNVLDGHQTQDEVPNVPAFLLTHLLSLAGDVALQQVVHLERAVSAELRRRRVLKEEQEAEKVGKQRKSKANESTMEEELGLVGASADDIEAELIRKICDTELLGGQQYLSAFLPLILRICNNPGRYSDPDLCTVATLALAKYMMISSDFCDTHLRLLFTLLEKSPLPSVRSNIMIALGDLSIRFPNLIEPWTPNLYARLRDPSREVRKTAGMVMTHLILKDMVKVKGQVSEMAVLLIESDQEISALARNFFNELSNKGNAVYNLLPDIISRLSDPDCGVEEEAFRTIMKQLLSYITKDKQTESLVEKMCHRFRTARTERQWRDLAHCLSLLPFSEKGLRKMQDCFDCYGDKLSDEAVYNSFLTTVAKMRRGAKPELKALIDEFEQKLSRCHNKGLENMDVPEEPSAESDAQPPKAKRPPLASVNVKKGKSEDDFQTPKPPASRKSRRKVAVNFSSDEESDLEAELSEAETPKNPTPIRRTARSRAK</sequence>
<dbReference type="EMBL" id="AF067969">
    <property type="protein sequence ID" value="AAC64359.1"/>
    <property type="molecule type" value="mRNA"/>
</dbReference>
<dbReference type="EMBL" id="AF072717">
    <property type="protein sequence ID" value="AAD15962.1"/>
    <property type="molecule type" value="mRNA"/>
</dbReference>
<dbReference type="PIR" id="T14900">
    <property type="entry name" value="T14900"/>
</dbReference>
<dbReference type="RefSeq" id="NP_001081840.1">
    <property type="nucleotide sequence ID" value="NM_001088371.1"/>
</dbReference>
<dbReference type="SMR" id="Q9YHY6"/>
<dbReference type="BioGRID" id="99415">
    <property type="interactions" value="4"/>
</dbReference>
<dbReference type="DIP" id="DIP-48587N"/>
<dbReference type="IntAct" id="Q9YHY6">
    <property type="interactions" value="2"/>
</dbReference>
<dbReference type="iPTMnet" id="Q9YHY6"/>
<dbReference type="GeneID" id="398080"/>
<dbReference type="KEGG" id="xla:398080"/>
<dbReference type="AGR" id="Xenbase:XB-GENE-5854852"/>
<dbReference type="CTD" id="398080"/>
<dbReference type="Xenbase" id="XB-GENE-5854852">
    <property type="gene designation" value="ncapd2.S"/>
</dbReference>
<dbReference type="OrthoDB" id="436262at2759"/>
<dbReference type="Proteomes" id="UP000186698">
    <property type="component" value="Chromosome 7S"/>
</dbReference>
<dbReference type="GO" id="GO:0000779">
    <property type="term" value="C:condensed chromosome, centromeric region"/>
    <property type="evidence" value="ECO:0000318"/>
    <property type="project" value="GO_Central"/>
</dbReference>
<dbReference type="GO" id="GO:0000796">
    <property type="term" value="C:condensin complex"/>
    <property type="evidence" value="ECO:0000318"/>
    <property type="project" value="GO_Central"/>
</dbReference>
<dbReference type="GO" id="GO:0005829">
    <property type="term" value="C:cytosol"/>
    <property type="evidence" value="ECO:0000304"/>
    <property type="project" value="Reactome"/>
</dbReference>
<dbReference type="GO" id="GO:0005634">
    <property type="term" value="C:nucleus"/>
    <property type="evidence" value="ECO:0007669"/>
    <property type="project" value="UniProtKB-SubCell"/>
</dbReference>
<dbReference type="GO" id="GO:0042393">
    <property type="term" value="F:histone binding"/>
    <property type="evidence" value="ECO:0000318"/>
    <property type="project" value="GO_Central"/>
</dbReference>
<dbReference type="GO" id="GO:0051301">
    <property type="term" value="P:cell division"/>
    <property type="evidence" value="ECO:0007669"/>
    <property type="project" value="UniProtKB-KW"/>
</dbReference>
<dbReference type="GO" id="GO:0010032">
    <property type="term" value="P:meiotic chromosome condensation"/>
    <property type="evidence" value="ECO:0000318"/>
    <property type="project" value="GO_Central"/>
</dbReference>
<dbReference type="GO" id="GO:0007076">
    <property type="term" value="P:mitotic chromosome condensation"/>
    <property type="evidence" value="ECO:0000318"/>
    <property type="project" value="GO_Central"/>
</dbReference>
<dbReference type="FunFam" id="1.25.10.10:FF:000695">
    <property type="entry name" value="Condensin complex subunit 1"/>
    <property type="match status" value="1"/>
</dbReference>
<dbReference type="Gene3D" id="1.25.10.10">
    <property type="entry name" value="Leucine-rich Repeat Variant"/>
    <property type="match status" value="2"/>
</dbReference>
<dbReference type="InterPro" id="IPR011989">
    <property type="entry name" value="ARM-like"/>
</dbReference>
<dbReference type="InterPro" id="IPR016024">
    <property type="entry name" value="ARM-type_fold"/>
</dbReference>
<dbReference type="InterPro" id="IPR026971">
    <property type="entry name" value="CND1/NCAPD3"/>
</dbReference>
<dbReference type="InterPro" id="IPR032682">
    <property type="entry name" value="Cnd1_C"/>
</dbReference>
<dbReference type="InterPro" id="IPR007673">
    <property type="entry name" value="Condensin_cplx_su1"/>
</dbReference>
<dbReference type="InterPro" id="IPR024324">
    <property type="entry name" value="Condensin_cplx_su1_N"/>
</dbReference>
<dbReference type="PANTHER" id="PTHR14222">
    <property type="entry name" value="CONDENSIN"/>
    <property type="match status" value="1"/>
</dbReference>
<dbReference type="PANTHER" id="PTHR14222:SF2">
    <property type="entry name" value="CONDENSIN COMPLEX SUBUNIT 1"/>
    <property type="match status" value="1"/>
</dbReference>
<dbReference type="Pfam" id="PF12717">
    <property type="entry name" value="Cnd1"/>
    <property type="match status" value="1"/>
</dbReference>
<dbReference type="Pfam" id="PF12922">
    <property type="entry name" value="Cnd1_N"/>
    <property type="match status" value="1"/>
</dbReference>
<dbReference type="PIRSF" id="PIRSF017127">
    <property type="entry name" value="Condensin_D2"/>
    <property type="match status" value="1"/>
</dbReference>
<dbReference type="SUPFAM" id="SSF48371">
    <property type="entry name" value="ARM repeat"/>
    <property type="match status" value="1"/>
</dbReference>
<reference key="1">
    <citation type="journal article" date="1998" name="Science">
        <title>Phosphorylation and activation of 13S condensin by Cdc2 in vitro.</title>
        <authorList>
            <person name="Kimura K."/>
            <person name="Hirano M."/>
            <person name="Kobayashi R."/>
            <person name="Hirano T."/>
        </authorList>
    </citation>
    <scope>NUCLEOTIDE SEQUENCE [MRNA]</scope>
    <scope>FUNCTION OF THE CONDENSIN COMPLEX</scope>
    <scope>PHOSPHORYLATION AT THR-1314; THR-1348 AND THR-1353 BY CDK1</scope>
</reference>
<reference key="2">
    <citation type="journal article" date="1998" name="J. Cell Biol.">
        <title>pEg7, a new Xenopus protein required for mitotic chromosome condensation in egg extracts.</title>
        <authorList>
            <person name="Cubizolles F."/>
            <person name="Legagneux V."/>
            <person name="Le Guellec R."/>
            <person name="Chartrain I."/>
            <person name="Uzbekov R."/>
            <person name="Ford C."/>
            <person name="Le Guellec K."/>
        </authorList>
    </citation>
    <scope>NUCLEOTIDE SEQUENCE [MRNA]</scope>
    <scope>FUNCTION</scope>
    <scope>SUBCELLULAR LOCATION</scope>
    <source>
        <tissue>Egg</tissue>
    </source>
</reference>
<reference key="3">
    <citation type="journal article" date="1997" name="Cell">
        <title>Condensins, chromosome condensation protein complexes containing XCAP-C, XCAP-E and a Xenopus homolog of the Drosophila Barren protein.</title>
        <authorList>
            <person name="Hirano T."/>
            <person name="Kobayashi R."/>
            <person name="Hirano M."/>
        </authorList>
    </citation>
    <scope>IDENTIFICATION IN A CONDENSIN COMPLEX WITH XCAP-C; XCAP-E; XCAP-H AND XCAP-G</scope>
</reference>
<reference key="4">
    <citation type="journal article" date="1999" name="Cell">
        <title>13S condensin actively reconfigures DNA by introducing global positive writhe: implications for chromosome condensation.</title>
        <authorList>
            <person name="Kimura K."/>
            <person name="Rybenkov V.V."/>
            <person name="Crisona N.J."/>
            <person name="Hirano T."/>
            <person name="Cozzarelli N.R."/>
        </authorList>
    </citation>
    <scope>FUNCTION OF THE CONDENSIN COMPLEX</scope>
</reference>
<proteinExistence type="evidence at protein level"/>
<organism>
    <name type="scientific">Xenopus laevis</name>
    <name type="common">African clawed frog</name>
    <dbReference type="NCBI Taxonomy" id="8355"/>
    <lineage>
        <taxon>Eukaryota</taxon>
        <taxon>Metazoa</taxon>
        <taxon>Chordata</taxon>
        <taxon>Craniata</taxon>
        <taxon>Vertebrata</taxon>
        <taxon>Euteleostomi</taxon>
        <taxon>Amphibia</taxon>
        <taxon>Batrachia</taxon>
        <taxon>Anura</taxon>
        <taxon>Pipoidea</taxon>
        <taxon>Pipidae</taxon>
        <taxon>Xenopodinae</taxon>
        <taxon>Xenopus</taxon>
        <taxon>Xenopus</taxon>
    </lineage>
</organism>
<protein>
    <recommendedName>
        <fullName>Condensin complex subunit 1</fullName>
    </recommendedName>
    <alternativeName>
        <fullName>Chromosome assembly protein XCAP-D2</fullName>
    </alternativeName>
    <alternativeName>
        <fullName>Chromosome condensation-related SMC-associated protein 1</fullName>
    </alternativeName>
    <alternativeName>
        <fullName>Chromosome-associated protein D2</fullName>
    </alternativeName>
    <alternativeName>
        <fullName>Eg7</fullName>
    </alternativeName>
    <alternativeName>
        <fullName>Non-SMC condensin I complex subunit D2</fullName>
    </alternativeName>
</protein>
<accession>Q9YHY6</accession>
<accession>Q9YGS5</accession>
<gene>
    <name type="primary">ncapd2</name>
    <name type="synonym">capd2</name>
    <name type="synonym">cnap1</name>
    <name type="synonym">eg7</name>
</gene>
<keyword id="KW-0131">Cell cycle</keyword>
<keyword id="KW-0132">Cell division</keyword>
<keyword id="KW-0158">Chromosome</keyword>
<keyword id="KW-0963">Cytoplasm</keyword>
<keyword id="KW-0226">DNA condensation</keyword>
<keyword id="KW-0498">Mitosis</keyword>
<keyword id="KW-0539">Nucleus</keyword>
<keyword id="KW-0597">Phosphoprotein</keyword>
<keyword id="KW-1185">Reference proteome</keyword>
<keyword id="KW-0677">Repeat</keyword>
<comment type="function">
    <text evidence="3 5 6">Regulatory subunit of the condensin complex, a complex required for conversion of interphase chromatin into mitotic-like condense chromosomes. The condensin complex probably introduces positive supercoils into relaxed DNA in the presence of type I topoisomerases and converts nicked DNA into positive knotted forms in the presence of type II topoisomerases. May target the condensin complex to DNA via its C-terminal domain.</text>
</comment>
<comment type="subunit">
    <text evidence="4">Component of the condensin complex, which contains the XCAP-E/SMC2 and XCAP-C/SMC4 heterodimer, and three non SMC subunits that probably regulate the complex: XCAP-H/NCAPH, XCAP-D2/NCAPD2 and XCAP-G/NCAPG.</text>
</comment>
<comment type="interaction">
    <interactant intactId="EBI-15815271">
        <id>Q9YHY6</id>
    </interactant>
    <interactant intactId="EBI-3511283">
        <id>P50533</id>
        <label>smc2</label>
    </interactant>
    <organismsDiffer>false</organismsDiffer>
    <experiments>4</experiments>
</comment>
<comment type="subcellular location">
    <subcellularLocation>
        <location evidence="6">Nucleus</location>
    </subcellularLocation>
    <subcellularLocation>
        <location evidence="6">Cytoplasm</location>
    </subcellularLocation>
    <subcellularLocation>
        <location evidence="6">Chromosome</location>
    </subcellularLocation>
    <text>In interphase cells, the majority of the condensin complex is found in the cytoplasm, while a minority of the complex is associated with chromatin. A subpopulation of the complex however remains associated with chromosome foci in interphase cells. During mitosis, most of the condensin complex is associated with the chromatin. At the onset of prophase, the regulatory subunits of the complex are phosphorylated by CDK1, leading to condensin's association with chromosome arms and to chromosome condensation. Dissociation from chromosomes is observed in late telophase.</text>
</comment>
<comment type="domain">
    <text evidence="1">The C-terminal domain interacts with histones H1 and H3, and may be responsible for condensin complex targeting to mitotic chromosomes. This domain is independent from the bipartite nuclear localization signal, although they are contained within the same region (By similarity).</text>
</comment>
<comment type="PTM">
    <text evidence="5">Phosphorylated by CDK1. Its phosphorylation, as well as that of XCAP-H and XCAP-G subunits, activates the condensin complex and is required for chromosome condensation.</text>
</comment>
<comment type="similarity">
    <text evidence="7">Belongs to the CND1 (condensin subunit 1) family.</text>
</comment>
<evidence type="ECO:0000250" key="1"/>
<evidence type="ECO:0000256" key="2">
    <source>
        <dbReference type="SAM" id="MobiDB-lite"/>
    </source>
</evidence>
<evidence type="ECO:0000269" key="3">
    <source>
    </source>
</evidence>
<evidence type="ECO:0000269" key="4">
    <source>
    </source>
</evidence>
<evidence type="ECO:0000269" key="5">
    <source>
    </source>
</evidence>
<evidence type="ECO:0000269" key="6">
    <source>
    </source>
</evidence>
<evidence type="ECO:0000305" key="7"/>